<accession>Q2VLK8</accession>
<accession>Q4DS77</accession>
<keyword id="KW-0106">Calcium</keyword>
<keyword id="KW-0967">Endosome</keyword>
<keyword id="KW-0325">Glycoprotein</keyword>
<keyword id="KW-0378">Hydrolase</keyword>
<keyword id="KW-0479">Metal-binding</keyword>
<keyword id="KW-0645">Protease</keyword>
<keyword id="KW-1185">Reference proteome</keyword>
<keyword id="KW-0732">Signal</keyword>
<keyword id="KW-0788">Thiol protease</keyword>
<evidence type="ECO:0000250" key="1">
    <source>
        <dbReference type="UniProtKB" id="Q585F3"/>
    </source>
</evidence>
<evidence type="ECO:0000250" key="2">
    <source>
        <dbReference type="UniProtKB" id="Q8IEW1"/>
    </source>
</evidence>
<evidence type="ECO:0000255" key="3"/>
<evidence type="ECO:0000255" key="4">
    <source>
        <dbReference type="PROSITE-ProRule" id="PRU00498"/>
    </source>
</evidence>
<evidence type="ECO:0000256" key="5">
    <source>
        <dbReference type="SAM" id="MobiDB-lite"/>
    </source>
</evidence>
<evidence type="ECO:0000269" key="6">
    <source>
    </source>
</evidence>
<evidence type="ECO:0000269" key="7">
    <source>
    </source>
</evidence>
<evidence type="ECO:0000303" key="8">
    <source>
    </source>
</evidence>
<evidence type="ECO:0000305" key="9"/>
<evidence type="ECO:0000305" key="10">
    <source>
    </source>
</evidence>
<evidence type="ECO:0000312" key="11">
    <source>
        <dbReference type="EMBL" id="AAY84579.1"/>
    </source>
</evidence>
<evidence type="ECO:0000312" key="12">
    <source>
        <dbReference type="EMBL" id="EAN95387.1"/>
    </source>
</evidence>
<evidence type="ECO:0000312" key="13">
    <source>
        <dbReference type="Proteomes" id="UP000002296"/>
    </source>
</evidence>
<organism evidence="13">
    <name type="scientific">Trypanosoma cruzi (strain CL Brener)</name>
    <dbReference type="NCBI Taxonomy" id="353153"/>
    <lineage>
        <taxon>Eukaryota</taxon>
        <taxon>Discoba</taxon>
        <taxon>Euglenozoa</taxon>
        <taxon>Kinetoplastea</taxon>
        <taxon>Metakinetoplastina</taxon>
        <taxon>Trypanosomatida</taxon>
        <taxon>Trypanosomatidae</taxon>
        <taxon>Trypanosoma</taxon>
        <taxon>Schizotrypanum</taxon>
    </lineage>
</organism>
<sequence length="442" mass="48698">MDLLLGVLSSGILQNALPFVAGVGRVKRPKRVKLEEAFREAHLCRPVIPYRAPTPYTGGRVKALFVGINYTGTRNKLSGCVNDVRQMLGTLQRIQFPISECCILVDDMRFPNFTALPTRENIIKHMAWLVHDVRPGDVLFFHYSGHGTETKAERDSEELYDQCLVPLDYQVQGAILDDDLFELLVKGLPAGVRMTAVFDCCHSASLLDLPFAFVGNNNFYSGGRHEMRKVRANNFSMGDVVVFSGCDDSGTSADVSNVSSFGSGLVASGGAATQALTWALVNTSQLSYADIFIRTREILRQKGYKQVPQLSSSKPVDLYKPFSLFGPITVNTSLIHYVPQQYLQPWGPPQPYYPPPQPQQPYYPPPQPQQPYYPSSQLPTQYNNLAPTAGIPLMTSSSEVPPGQYPQALSGDQNGGVPPQYPSDQSTYYSSAQYLSGVGKPL</sequence>
<protein>
    <recommendedName>
        <fullName evidence="8">Metacaspase-5</fullName>
        <ecNumber evidence="7">3.4.22.-</ecNumber>
    </recommendedName>
    <alternativeName>
        <fullName evidence="8">TcMCA5</fullName>
    </alternativeName>
</protein>
<feature type="signal peptide" evidence="3">
    <location>
        <begin position="1"/>
        <end position="18"/>
    </location>
</feature>
<feature type="chain" id="PRO_0000451287" description="Metacaspase-5" evidence="3">
    <location>
        <begin position="19"/>
        <end position="442"/>
    </location>
</feature>
<feature type="region of interest" description="Important for catalytic activity" evidence="7">
    <location>
        <begin position="19"/>
        <end position="62"/>
    </location>
</feature>
<feature type="region of interest" description="Negatively regulates catalytic activity" evidence="7">
    <location>
        <begin position="336"/>
        <end position="442"/>
    </location>
</feature>
<feature type="region of interest" description="Disordered" evidence="5">
    <location>
        <begin position="348"/>
        <end position="442"/>
    </location>
</feature>
<feature type="compositionally biased region" description="Pro residues" evidence="5">
    <location>
        <begin position="348"/>
        <end position="371"/>
    </location>
</feature>
<feature type="compositionally biased region" description="Low complexity" evidence="5">
    <location>
        <begin position="372"/>
        <end position="382"/>
    </location>
</feature>
<feature type="compositionally biased region" description="Polar residues" evidence="5">
    <location>
        <begin position="422"/>
        <end position="434"/>
    </location>
</feature>
<feature type="active site" evidence="10">
    <location>
        <position position="146"/>
    </location>
</feature>
<feature type="active site" evidence="10">
    <location>
        <position position="201"/>
    </location>
</feature>
<feature type="binding site" evidence="1">
    <location>
        <position position="161"/>
    </location>
    <ligand>
        <name>Ca(2+)</name>
        <dbReference type="ChEBI" id="CHEBI:29108"/>
    </ligand>
</feature>
<feature type="binding site" evidence="1">
    <location>
        <position position="177"/>
    </location>
    <ligand>
        <name>Ca(2+)</name>
        <dbReference type="ChEBI" id="CHEBI:29108"/>
    </ligand>
</feature>
<feature type="binding site" evidence="1">
    <location>
        <position position="178"/>
    </location>
    <ligand>
        <name>Ca(2+)</name>
        <dbReference type="ChEBI" id="CHEBI:29108"/>
    </ligand>
</feature>
<feature type="binding site" evidence="1">
    <location>
        <position position="208"/>
    </location>
    <ligand>
        <name>Ca(2+)</name>
        <dbReference type="ChEBI" id="CHEBI:29108"/>
    </ligand>
</feature>
<feature type="glycosylation site" description="N-linked (GlcNAc...) asparagine" evidence="4">
    <location>
        <position position="69"/>
    </location>
</feature>
<feature type="glycosylation site" description="N-linked (GlcNAc...) asparagine" evidence="4">
    <location>
        <position position="112"/>
    </location>
</feature>
<feature type="glycosylation site" description="N-linked (GlcNAc...) asparagine" evidence="4">
    <location>
        <position position="234"/>
    </location>
</feature>
<feature type="glycosylation site" description="N-linked (GlcNAc...) asparagine" evidence="4">
    <location>
        <position position="257"/>
    </location>
</feature>
<feature type="glycosylation site" description="N-linked (GlcNAc...) asparagine" evidence="4">
    <location>
        <position position="282"/>
    </location>
</feature>
<feature type="glycosylation site" description="N-linked (GlcNAc...) asparagine" evidence="4">
    <location>
        <position position="331"/>
    </location>
</feature>
<feature type="mutagenesis site" description="Loss of catalytic activity." evidence="7">
    <original>H</original>
    <variation>A</variation>
    <location>
        <position position="146"/>
    </location>
</feature>
<feature type="mutagenesis site" description="Loss of catalytic activity." evidence="7">
    <original>C</original>
    <variation>A</variation>
    <location>
        <position position="201"/>
    </location>
</feature>
<name>MCA5_TRYCC</name>
<dbReference type="EC" id="3.4.22.-" evidence="7"/>
<dbReference type="EMBL" id="DQ015868">
    <property type="protein sequence ID" value="AAY84579.1"/>
    <property type="molecule type" value="Genomic_DNA"/>
</dbReference>
<dbReference type="EMBL" id="AAHK01000216">
    <property type="protein sequence ID" value="EAN95387.1"/>
    <property type="molecule type" value="Genomic_DNA"/>
</dbReference>
<dbReference type="RefSeq" id="XP_817238.1">
    <property type="nucleotide sequence ID" value="XM_812145.1"/>
</dbReference>
<dbReference type="SMR" id="Q2VLK8"/>
<dbReference type="FunCoup" id="Q2VLK8">
    <property type="interactions" value="376"/>
</dbReference>
<dbReference type="STRING" id="353153.Q4DS77"/>
<dbReference type="MEROPS" id="C14.043"/>
<dbReference type="GlyCosmos" id="Q2VLK8">
    <property type="glycosylation" value="6 sites, No reported glycans"/>
</dbReference>
<dbReference type="PaxDb" id="353153-Q4DS77"/>
<dbReference type="EnsemblProtists" id="EAN95387">
    <property type="protein sequence ID" value="EAN95387"/>
    <property type="gene ID" value="Tc00.1047053510759.160"/>
</dbReference>
<dbReference type="GeneID" id="3549235"/>
<dbReference type="KEGG" id="tcr:510759.160"/>
<dbReference type="eggNOG" id="KOG1546">
    <property type="taxonomic scope" value="Eukaryota"/>
</dbReference>
<dbReference type="InParanoid" id="Q2VLK8"/>
<dbReference type="OMA" id="EKYDQCL"/>
<dbReference type="Proteomes" id="UP000002296">
    <property type="component" value="Unassembled WGS sequence"/>
</dbReference>
<dbReference type="GO" id="GO:0055037">
    <property type="term" value="C:recycling endosome"/>
    <property type="evidence" value="ECO:0007669"/>
    <property type="project" value="UniProtKB-SubCell"/>
</dbReference>
<dbReference type="GO" id="GO:0004197">
    <property type="term" value="F:cysteine-type endopeptidase activity"/>
    <property type="evidence" value="ECO:0000314"/>
    <property type="project" value="UniProtKB"/>
</dbReference>
<dbReference type="GO" id="GO:0046872">
    <property type="term" value="F:metal ion binding"/>
    <property type="evidence" value="ECO:0007669"/>
    <property type="project" value="UniProtKB-KW"/>
</dbReference>
<dbReference type="GO" id="GO:0006508">
    <property type="term" value="P:proteolysis"/>
    <property type="evidence" value="ECO:0000314"/>
    <property type="project" value="UniProtKB"/>
</dbReference>
<dbReference type="Gene3D" id="3.40.50.12660">
    <property type="match status" value="1"/>
</dbReference>
<dbReference type="InterPro" id="IPR029030">
    <property type="entry name" value="Caspase-like_dom_sf"/>
</dbReference>
<dbReference type="InterPro" id="IPR050452">
    <property type="entry name" value="Metacaspase"/>
</dbReference>
<dbReference type="InterPro" id="IPR011600">
    <property type="entry name" value="Pept_C14_caspase"/>
</dbReference>
<dbReference type="PANTHER" id="PTHR48104:SF30">
    <property type="entry name" value="METACASPASE-1"/>
    <property type="match status" value="1"/>
</dbReference>
<dbReference type="PANTHER" id="PTHR48104">
    <property type="entry name" value="METACASPASE-4"/>
    <property type="match status" value="1"/>
</dbReference>
<dbReference type="Pfam" id="PF00656">
    <property type="entry name" value="Peptidase_C14"/>
    <property type="match status" value="1"/>
</dbReference>
<dbReference type="SUPFAM" id="SSF52129">
    <property type="entry name" value="Caspase-like"/>
    <property type="match status" value="1"/>
</dbReference>
<gene>
    <name evidence="8" type="primary">MCA5</name>
    <name evidence="12" type="ORF">Tc00.1047053510759.160</name>
</gene>
<proteinExistence type="evidence at protein level"/>
<reference evidence="11" key="1">
    <citation type="journal article" date="2006" name="Mol. Biochem. Parasitol.">
        <title>Metacaspases of Trypanosoma cruzi: possible candidates for programmed cell death mediators.</title>
        <authorList>
            <person name="Kosec G."/>
            <person name="Alvarez V.E."/>
            <person name="Aguero F."/>
            <person name="Sanchez D."/>
            <person name="Dolinar M."/>
            <person name="Turk B."/>
            <person name="Turk V."/>
            <person name="Cazzulo J.J."/>
        </authorList>
    </citation>
    <scope>NUCLEOTIDE SEQUENCE [GENOMIC DNA]</scope>
    <scope>DEVELOPMENTAL STAGE</scope>
    <source>
        <strain evidence="11">CL Brener</strain>
    </source>
</reference>
<reference evidence="13" key="2">
    <citation type="journal article" date="2005" name="Science">
        <title>The genome sequence of Trypanosoma cruzi, etiologic agent of Chagas disease.</title>
        <authorList>
            <person name="El-Sayed N.M.A."/>
            <person name="Myler P.J."/>
            <person name="Bartholomeu D.C."/>
            <person name="Nilsson D."/>
            <person name="Aggarwal G."/>
            <person name="Tran A.-N."/>
            <person name="Ghedin E."/>
            <person name="Worthey E.A."/>
            <person name="Delcher A.L."/>
            <person name="Blandin G."/>
            <person name="Westenberger S.J."/>
            <person name="Caler E."/>
            <person name="Cerqueira G.C."/>
            <person name="Branche C."/>
            <person name="Haas B."/>
            <person name="Anupama A."/>
            <person name="Arner E."/>
            <person name="Aslund L."/>
            <person name="Attipoe P."/>
            <person name="Bontempi E."/>
            <person name="Bringaud F."/>
            <person name="Burton P."/>
            <person name="Cadag E."/>
            <person name="Campbell D.A."/>
            <person name="Carrington M."/>
            <person name="Crabtree J."/>
            <person name="Darban H."/>
            <person name="da Silveira J.F."/>
            <person name="de Jong P."/>
            <person name="Edwards K."/>
            <person name="Englund P.T."/>
            <person name="Fazelina G."/>
            <person name="Feldblyum T."/>
            <person name="Ferella M."/>
            <person name="Frasch A.C."/>
            <person name="Gull K."/>
            <person name="Horn D."/>
            <person name="Hou L."/>
            <person name="Huang Y."/>
            <person name="Kindlund E."/>
            <person name="Klingbeil M."/>
            <person name="Kluge S."/>
            <person name="Koo H."/>
            <person name="Lacerda D."/>
            <person name="Levin M.J."/>
            <person name="Lorenzi H."/>
            <person name="Louie T."/>
            <person name="Machado C.R."/>
            <person name="McCulloch R."/>
            <person name="McKenna A."/>
            <person name="Mizuno Y."/>
            <person name="Mottram J.C."/>
            <person name="Nelson S."/>
            <person name="Ochaya S."/>
            <person name="Osoegawa K."/>
            <person name="Pai G."/>
            <person name="Parsons M."/>
            <person name="Pentony M."/>
            <person name="Pettersson U."/>
            <person name="Pop M."/>
            <person name="Ramirez J.L."/>
            <person name="Rinta J."/>
            <person name="Robertson L."/>
            <person name="Salzberg S.L."/>
            <person name="Sanchez D.O."/>
            <person name="Seyler A."/>
            <person name="Sharma R."/>
            <person name="Shetty J."/>
            <person name="Simpson A.J."/>
            <person name="Sisk E."/>
            <person name="Tammi M.T."/>
            <person name="Tarleton R."/>
            <person name="Teixeira S."/>
            <person name="Van Aken S."/>
            <person name="Vogt C."/>
            <person name="Ward P.N."/>
            <person name="Wickstead B."/>
            <person name="Wortman J."/>
            <person name="White O."/>
            <person name="Fraser C.M."/>
            <person name="Stuart K.D."/>
            <person name="Andersson B."/>
        </authorList>
    </citation>
    <scope>NUCLEOTIDE SEQUENCE [LARGE SCALE GENOMIC DNA]</scope>
    <source>
        <strain evidence="13">CL Brener</strain>
    </source>
</reference>
<reference evidence="9" key="3">
    <citation type="journal article" date="2012" name="Cell Death Differ.">
        <title>Antagonic activities of Trypanosoma cruzi metacaspases affect the balance between cell proliferation, death and differentiation.</title>
        <authorList>
            <person name="Laverriere M."/>
            <person name="Cazzulo J.J."/>
            <person name="Alvarez V.E."/>
        </authorList>
    </citation>
    <scope>FUNCTION</scope>
    <scope>CATALYTIC ACTIVITY</scope>
    <scope>ACTIVITY REGULATION</scope>
    <scope>LACK OF PROTEOLYTIC CLEAVAGE</scope>
    <scope>ACTIVE SITE</scope>
    <scope>MUTAGENESIS OF HIS-146 AND CYS-201</scope>
</reference>
<comment type="function">
    <text evidence="7">Cysteine protease that cleaves specifically after arginine or lysine residues (PubMed:22402587). May play a role in apoptosis (PubMed:22402587).</text>
</comment>
<comment type="activity regulation">
    <text evidence="7">Activated by Ca(2+).</text>
</comment>
<comment type="subcellular location">
    <subcellularLocation>
        <location evidence="2">Recycling endosome</location>
    </subcellularLocation>
    <text evidence="2">Localizes to RAB11-positive recycling endosomes.</text>
</comment>
<comment type="developmental stage">
    <text evidence="6">Specifically expressed in epimastigotes (at protein level).</text>
</comment>
<comment type="PTM">
    <text evidence="7">In epimastigotes, the unprocessed enzyme appears to be the main form (PubMed:22402587). Auto-processing is dispensable for catalytic activity towards small oligopeptide substrates (PubMed:22402587).</text>
</comment>
<comment type="similarity">
    <text evidence="9">Belongs to the peptidase C14B family.</text>
</comment>